<accession>B5QW85</accession>
<keyword id="KW-0276">Fatty acid metabolism</keyword>
<keyword id="KW-0413">Isomerase</keyword>
<keyword id="KW-0442">Lipid degradation</keyword>
<keyword id="KW-0443">Lipid metabolism</keyword>
<keyword id="KW-0456">Lyase</keyword>
<keyword id="KW-0511">Multifunctional enzyme</keyword>
<keyword id="KW-0520">NAD</keyword>
<keyword id="KW-0560">Oxidoreductase</keyword>
<name>FADB_SALEP</name>
<dbReference type="EC" id="4.2.1.17" evidence="1"/>
<dbReference type="EC" id="5.1.2.3" evidence="1"/>
<dbReference type="EC" id="5.3.3.8" evidence="1"/>
<dbReference type="EC" id="1.1.1.35" evidence="1"/>
<dbReference type="EMBL" id="AM933172">
    <property type="protein sequence ID" value="CAR35353.1"/>
    <property type="molecule type" value="Genomic_DNA"/>
</dbReference>
<dbReference type="RefSeq" id="WP_000965996.1">
    <property type="nucleotide sequence ID" value="NC_011294.1"/>
</dbReference>
<dbReference type="SMR" id="B5QW85"/>
<dbReference type="KEGG" id="set:SEN3777"/>
<dbReference type="HOGENOM" id="CLU_009834_16_3_6"/>
<dbReference type="UniPathway" id="UPA00659"/>
<dbReference type="Proteomes" id="UP000000613">
    <property type="component" value="Chromosome"/>
</dbReference>
<dbReference type="GO" id="GO:0036125">
    <property type="term" value="C:fatty acid beta-oxidation multienzyme complex"/>
    <property type="evidence" value="ECO:0007669"/>
    <property type="project" value="InterPro"/>
</dbReference>
<dbReference type="GO" id="GO:0008692">
    <property type="term" value="F:3-hydroxybutyryl-CoA epimerase activity"/>
    <property type="evidence" value="ECO:0007669"/>
    <property type="project" value="UniProtKB-UniRule"/>
</dbReference>
<dbReference type="GO" id="GO:0004165">
    <property type="term" value="F:delta(3)-delta(2)-enoyl-CoA isomerase activity"/>
    <property type="evidence" value="ECO:0007669"/>
    <property type="project" value="UniProtKB-UniRule"/>
</dbReference>
<dbReference type="GO" id="GO:0004300">
    <property type="term" value="F:enoyl-CoA hydratase activity"/>
    <property type="evidence" value="ECO:0007669"/>
    <property type="project" value="UniProtKB-UniRule"/>
</dbReference>
<dbReference type="GO" id="GO:0016509">
    <property type="term" value="F:long-chain-3-hydroxyacyl-CoA dehydrogenase activity"/>
    <property type="evidence" value="ECO:0007669"/>
    <property type="project" value="TreeGrafter"/>
</dbReference>
<dbReference type="GO" id="GO:0070403">
    <property type="term" value="F:NAD+ binding"/>
    <property type="evidence" value="ECO:0007669"/>
    <property type="project" value="InterPro"/>
</dbReference>
<dbReference type="GO" id="GO:0006635">
    <property type="term" value="P:fatty acid beta-oxidation"/>
    <property type="evidence" value="ECO:0007669"/>
    <property type="project" value="UniProtKB-UniRule"/>
</dbReference>
<dbReference type="CDD" id="cd06558">
    <property type="entry name" value="crotonase-like"/>
    <property type="match status" value="1"/>
</dbReference>
<dbReference type="FunFam" id="1.10.1040.50:FF:000001">
    <property type="entry name" value="Fatty acid oxidation complex subunit alpha"/>
    <property type="match status" value="1"/>
</dbReference>
<dbReference type="FunFam" id="3.90.226.10:FF:000018">
    <property type="entry name" value="Fatty acid oxidation complex subunit alpha"/>
    <property type="match status" value="1"/>
</dbReference>
<dbReference type="FunFam" id="3.40.50.720:FF:000009">
    <property type="entry name" value="Fatty oxidation complex, alpha subunit"/>
    <property type="match status" value="1"/>
</dbReference>
<dbReference type="Gene3D" id="1.10.1040.50">
    <property type="match status" value="1"/>
</dbReference>
<dbReference type="Gene3D" id="3.90.226.10">
    <property type="entry name" value="2-enoyl-CoA Hydratase, Chain A, domain 1"/>
    <property type="match status" value="1"/>
</dbReference>
<dbReference type="Gene3D" id="3.40.50.720">
    <property type="entry name" value="NAD(P)-binding Rossmann-like Domain"/>
    <property type="match status" value="1"/>
</dbReference>
<dbReference type="HAMAP" id="MF_01621">
    <property type="entry name" value="FadB"/>
    <property type="match status" value="1"/>
</dbReference>
<dbReference type="InterPro" id="IPR006180">
    <property type="entry name" value="3-OHacyl-CoA_DH_CS"/>
</dbReference>
<dbReference type="InterPro" id="IPR006176">
    <property type="entry name" value="3-OHacyl-CoA_DH_NAD-bd"/>
</dbReference>
<dbReference type="InterPro" id="IPR006108">
    <property type="entry name" value="3HC_DH_C"/>
</dbReference>
<dbReference type="InterPro" id="IPR008927">
    <property type="entry name" value="6-PGluconate_DH-like_C_sf"/>
</dbReference>
<dbReference type="InterPro" id="IPR029045">
    <property type="entry name" value="ClpP/crotonase-like_dom_sf"/>
</dbReference>
<dbReference type="InterPro" id="IPR018376">
    <property type="entry name" value="Enoyl-CoA_hyd/isom_CS"/>
</dbReference>
<dbReference type="InterPro" id="IPR001753">
    <property type="entry name" value="Enoyl-CoA_hydra/iso"/>
</dbReference>
<dbReference type="InterPro" id="IPR050136">
    <property type="entry name" value="FA_oxidation_alpha_subunit"/>
</dbReference>
<dbReference type="InterPro" id="IPR012799">
    <property type="entry name" value="FadB"/>
</dbReference>
<dbReference type="InterPro" id="IPR036291">
    <property type="entry name" value="NAD(P)-bd_dom_sf"/>
</dbReference>
<dbReference type="NCBIfam" id="TIGR02437">
    <property type="entry name" value="FadB"/>
    <property type="match status" value="1"/>
</dbReference>
<dbReference type="NCBIfam" id="NF008727">
    <property type="entry name" value="PRK11730.1"/>
    <property type="match status" value="1"/>
</dbReference>
<dbReference type="PANTHER" id="PTHR43612">
    <property type="entry name" value="TRIFUNCTIONAL ENZYME SUBUNIT ALPHA"/>
    <property type="match status" value="1"/>
</dbReference>
<dbReference type="PANTHER" id="PTHR43612:SF3">
    <property type="entry name" value="TRIFUNCTIONAL ENZYME SUBUNIT ALPHA, MITOCHONDRIAL"/>
    <property type="match status" value="1"/>
</dbReference>
<dbReference type="Pfam" id="PF00725">
    <property type="entry name" value="3HCDH"/>
    <property type="match status" value="2"/>
</dbReference>
<dbReference type="Pfam" id="PF02737">
    <property type="entry name" value="3HCDH_N"/>
    <property type="match status" value="1"/>
</dbReference>
<dbReference type="Pfam" id="PF00378">
    <property type="entry name" value="ECH_1"/>
    <property type="match status" value="1"/>
</dbReference>
<dbReference type="SUPFAM" id="SSF48179">
    <property type="entry name" value="6-phosphogluconate dehydrogenase C-terminal domain-like"/>
    <property type="match status" value="2"/>
</dbReference>
<dbReference type="SUPFAM" id="SSF52096">
    <property type="entry name" value="ClpP/crotonase"/>
    <property type="match status" value="1"/>
</dbReference>
<dbReference type="SUPFAM" id="SSF51735">
    <property type="entry name" value="NAD(P)-binding Rossmann-fold domains"/>
    <property type="match status" value="1"/>
</dbReference>
<dbReference type="PROSITE" id="PS00067">
    <property type="entry name" value="3HCDH"/>
    <property type="match status" value="1"/>
</dbReference>
<dbReference type="PROSITE" id="PS00166">
    <property type="entry name" value="ENOYL_COA_HYDRATASE"/>
    <property type="match status" value="1"/>
</dbReference>
<proteinExistence type="inferred from homology"/>
<evidence type="ECO:0000255" key="1">
    <source>
        <dbReference type="HAMAP-Rule" id="MF_01621"/>
    </source>
</evidence>
<evidence type="ECO:0000256" key="2">
    <source>
        <dbReference type="SAM" id="MobiDB-lite"/>
    </source>
</evidence>
<gene>
    <name evidence="1" type="primary">fadB</name>
    <name type="ordered locus">SEN3777</name>
</gene>
<comment type="function">
    <text evidence="1">Involved in the aerobic and anaerobic degradation of long-chain fatty acids via beta-oxidation cycle. Catalyzes the formation of 3-oxoacyl-CoA from enoyl-CoA via L-3-hydroxyacyl-CoA. It can also use D-3-hydroxyacyl-CoA and cis-3-enoyl-CoA as substrate.</text>
</comment>
<comment type="catalytic activity">
    <reaction evidence="1">
        <text>a (3S)-3-hydroxyacyl-CoA + NAD(+) = a 3-oxoacyl-CoA + NADH + H(+)</text>
        <dbReference type="Rhea" id="RHEA:22432"/>
        <dbReference type="ChEBI" id="CHEBI:15378"/>
        <dbReference type="ChEBI" id="CHEBI:57318"/>
        <dbReference type="ChEBI" id="CHEBI:57540"/>
        <dbReference type="ChEBI" id="CHEBI:57945"/>
        <dbReference type="ChEBI" id="CHEBI:90726"/>
        <dbReference type="EC" id="1.1.1.35"/>
    </reaction>
</comment>
<comment type="catalytic activity">
    <reaction evidence="1">
        <text>a (3S)-3-hydroxyacyl-CoA = a (2E)-enoyl-CoA + H2O</text>
        <dbReference type="Rhea" id="RHEA:16105"/>
        <dbReference type="ChEBI" id="CHEBI:15377"/>
        <dbReference type="ChEBI" id="CHEBI:57318"/>
        <dbReference type="ChEBI" id="CHEBI:58856"/>
        <dbReference type="EC" id="4.2.1.17"/>
    </reaction>
</comment>
<comment type="catalytic activity">
    <reaction evidence="1">
        <text>a 4-saturated-(3S)-3-hydroxyacyl-CoA = a (3E)-enoyl-CoA + H2O</text>
        <dbReference type="Rhea" id="RHEA:20724"/>
        <dbReference type="ChEBI" id="CHEBI:15377"/>
        <dbReference type="ChEBI" id="CHEBI:58521"/>
        <dbReference type="ChEBI" id="CHEBI:137480"/>
        <dbReference type="EC" id="4.2.1.17"/>
    </reaction>
</comment>
<comment type="catalytic activity">
    <reaction evidence="1">
        <text>(3S)-3-hydroxybutanoyl-CoA = (3R)-3-hydroxybutanoyl-CoA</text>
        <dbReference type="Rhea" id="RHEA:21760"/>
        <dbReference type="ChEBI" id="CHEBI:57315"/>
        <dbReference type="ChEBI" id="CHEBI:57316"/>
        <dbReference type="EC" id="5.1.2.3"/>
    </reaction>
</comment>
<comment type="catalytic activity">
    <reaction evidence="1">
        <text>a (3Z)-enoyl-CoA = a 4-saturated (2E)-enoyl-CoA</text>
        <dbReference type="Rhea" id="RHEA:45900"/>
        <dbReference type="ChEBI" id="CHEBI:85097"/>
        <dbReference type="ChEBI" id="CHEBI:85489"/>
        <dbReference type="EC" id="5.3.3.8"/>
    </reaction>
</comment>
<comment type="catalytic activity">
    <reaction evidence="1">
        <text>a (3E)-enoyl-CoA = a 4-saturated (2E)-enoyl-CoA</text>
        <dbReference type="Rhea" id="RHEA:45228"/>
        <dbReference type="ChEBI" id="CHEBI:58521"/>
        <dbReference type="ChEBI" id="CHEBI:85097"/>
        <dbReference type="EC" id="5.3.3.8"/>
    </reaction>
</comment>
<comment type="pathway">
    <text evidence="1">Lipid metabolism; fatty acid beta-oxidation.</text>
</comment>
<comment type="subunit">
    <text evidence="1">Heterotetramer of two alpha chains (FadB) and two beta chains (FadA).</text>
</comment>
<comment type="similarity">
    <text evidence="1">In the N-terminal section; belongs to the enoyl-CoA hydratase/isomerase family.</text>
</comment>
<comment type="similarity">
    <text evidence="1">In the C-terminal section; belongs to the 3-hydroxyacyl-CoA dehydrogenase family.</text>
</comment>
<organism>
    <name type="scientific">Salmonella enteritidis PT4 (strain P125109)</name>
    <dbReference type="NCBI Taxonomy" id="550537"/>
    <lineage>
        <taxon>Bacteria</taxon>
        <taxon>Pseudomonadati</taxon>
        <taxon>Pseudomonadota</taxon>
        <taxon>Gammaproteobacteria</taxon>
        <taxon>Enterobacterales</taxon>
        <taxon>Enterobacteriaceae</taxon>
        <taxon>Salmonella</taxon>
    </lineage>
</organism>
<sequence>MLYKGDTLYLDWLEDGIAELVFDAPGSVNKLDTATVASLGQALEVLEKQHDLKGLLLRSNKAAFIVGADITEFLSLFLVPEEQLSQWLHFANSVFNRLEDLPVPTLAAVNGYALGGGCECVLATDYRLATPDLRIGLPETKLGIMPGFGGSVRLPRMLGADSALEIIAAGKDVGAEHALKIGLVDGVVKQEKLIEGAIAVLRQAITGDLDWRAKRQPKLEPLKLSKIEAAMSFTIAKGMVAQTAGKHYPAPMTAVKTIEAAARFGREEALNLENKSFVPLAHTNEARALVGIFLNDQYVKGKAKKLTKDIETPKQAAVLGAGIMGGGIAYQSAWKGVPVIMKDINDKSLNLGMTEAAKLLNKQLERGKIDGLKLAGVISTIHPTLDYAGFDRVDAVVEAVVENPKVKKAVLAETEQKVRPETVLASNTSTIPIGELASALERPENFCGMHFFNPVHRMPLVEIIRGEKSSDETIAKVVAWASKMGKTPIVVNDCPGFFVNRVLFPYFAGFSQLLRDGADFRKVDKVMEKQFGWPMGPAYLLDVVGIDTAHHAQAVMAAGFPQRMQKEYRDAIDALFDASRFGQKNGLGFWRYKEDSKGKPKKEEDAAVDDLLASVSQTKRDFSDDEIIARMMIPMINEVVRCLEEGIIASPAEADMALVYGLGFPPFHGGAFRWLDTQGSAKYLDMAQQYQHLGPLYEVPEGLRNKARHNEPYYPPVEPARPVGSLKTA</sequence>
<reference key="1">
    <citation type="journal article" date="2008" name="Genome Res.">
        <title>Comparative genome analysis of Salmonella enteritidis PT4 and Salmonella gallinarum 287/91 provides insights into evolutionary and host adaptation pathways.</title>
        <authorList>
            <person name="Thomson N.R."/>
            <person name="Clayton D.J."/>
            <person name="Windhorst D."/>
            <person name="Vernikos G."/>
            <person name="Davidson S."/>
            <person name="Churcher C."/>
            <person name="Quail M.A."/>
            <person name="Stevens M."/>
            <person name="Jones M.A."/>
            <person name="Watson M."/>
            <person name="Barron A."/>
            <person name="Layton A."/>
            <person name="Pickard D."/>
            <person name="Kingsley R.A."/>
            <person name="Bignell A."/>
            <person name="Clark L."/>
            <person name="Harris B."/>
            <person name="Ormond D."/>
            <person name="Abdellah Z."/>
            <person name="Brooks K."/>
            <person name="Cherevach I."/>
            <person name="Chillingworth T."/>
            <person name="Woodward J."/>
            <person name="Norberczak H."/>
            <person name="Lord A."/>
            <person name="Arrowsmith C."/>
            <person name="Jagels K."/>
            <person name="Moule S."/>
            <person name="Mungall K."/>
            <person name="Saunders M."/>
            <person name="Whitehead S."/>
            <person name="Chabalgoity J.A."/>
            <person name="Maskell D."/>
            <person name="Humphreys T."/>
            <person name="Roberts M."/>
            <person name="Barrow P.A."/>
            <person name="Dougan G."/>
            <person name="Parkhill J."/>
        </authorList>
    </citation>
    <scope>NUCLEOTIDE SEQUENCE [LARGE SCALE GENOMIC DNA]</scope>
    <source>
        <strain>P125109</strain>
    </source>
</reference>
<protein>
    <recommendedName>
        <fullName evidence="1">Fatty acid oxidation complex subunit alpha</fullName>
    </recommendedName>
    <domain>
        <recommendedName>
            <fullName evidence="1">Enoyl-CoA hydratase/Delta(3)-cis-Delta(2)-trans-enoyl-CoA isomerase/3-hydroxybutyryl-CoA epimerase</fullName>
            <ecNumber evidence="1">4.2.1.17</ecNumber>
            <ecNumber evidence="1">5.1.2.3</ecNumber>
            <ecNumber evidence="1">5.3.3.8</ecNumber>
        </recommendedName>
    </domain>
    <domain>
        <recommendedName>
            <fullName evidence="1">3-hydroxyacyl-CoA dehydrogenase</fullName>
            <ecNumber evidence="1">1.1.1.35</ecNumber>
        </recommendedName>
    </domain>
</protein>
<feature type="chain" id="PRO_1000186048" description="Fatty acid oxidation complex subunit alpha">
    <location>
        <begin position="1"/>
        <end position="729"/>
    </location>
</feature>
<feature type="region of interest" description="Enoyl-CoA hydratase/isomerase" evidence="1">
    <location>
        <begin position="1"/>
        <end position="189"/>
    </location>
</feature>
<feature type="region of interest" description="3-hydroxyacyl-CoA dehydrogenase" evidence="1">
    <location>
        <begin position="311"/>
        <end position="729"/>
    </location>
</feature>
<feature type="region of interest" description="Disordered" evidence="2">
    <location>
        <begin position="708"/>
        <end position="729"/>
    </location>
</feature>
<feature type="active site" description="For 3-hydroxyacyl-CoA dehydrogenase activity" evidence="1">
    <location>
        <position position="450"/>
    </location>
</feature>
<feature type="binding site" evidence="1">
    <location>
        <position position="296"/>
    </location>
    <ligand>
        <name>substrate</name>
    </ligand>
</feature>
<feature type="binding site" evidence="1">
    <location>
        <position position="324"/>
    </location>
    <ligand>
        <name>NAD(+)</name>
        <dbReference type="ChEBI" id="CHEBI:57540"/>
    </ligand>
</feature>
<feature type="binding site" evidence="1">
    <location>
        <position position="343"/>
    </location>
    <ligand>
        <name>NAD(+)</name>
        <dbReference type="ChEBI" id="CHEBI:57540"/>
    </ligand>
</feature>
<feature type="binding site" evidence="1">
    <location>
        <begin position="400"/>
        <end position="402"/>
    </location>
    <ligand>
        <name>NAD(+)</name>
        <dbReference type="ChEBI" id="CHEBI:57540"/>
    </ligand>
</feature>
<feature type="binding site" evidence="1">
    <location>
        <position position="407"/>
    </location>
    <ligand>
        <name>NAD(+)</name>
        <dbReference type="ChEBI" id="CHEBI:57540"/>
    </ligand>
</feature>
<feature type="binding site" evidence="1">
    <location>
        <position position="429"/>
    </location>
    <ligand>
        <name>NAD(+)</name>
        <dbReference type="ChEBI" id="CHEBI:57540"/>
    </ligand>
</feature>
<feature type="binding site" evidence="1">
    <location>
        <position position="453"/>
    </location>
    <ligand>
        <name>NAD(+)</name>
        <dbReference type="ChEBI" id="CHEBI:57540"/>
    </ligand>
</feature>
<feature type="binding site" evidence="1">
    <location>
        <position position="500"/>
    </location>
    <ligand>
        <name>substrate</name>
    </ligand>
</feature>
<feature type="binding site" evidence="1">
    <location>
        <position position="660"/>
    </location>
    <ligand>
        <name>substrate</name>
    </ligand>
</feature>
<feature type="site" description="Important for catalytic activity" evidence="1">
    <location>
        <position position="119"/>
    </location>
</feature>
<feature type="site" description="Important for catalytic activity" evidence="1">
    <location>
        <position position="139"/>
    </location>
</feature>